<reference key="1">
    <citation type="journal article" date="2006" name="BMC Genomics">
        <title>The genome of the square archaeon Haloquadratum walsbyi: life at the limits of water activity.</title>
        <authorList>
            <person name="Bolhuis H."/>
            <person name="Palm P."/>
            <person name="Wende A."/>
            <person name="Falb M."/>
            <person name="Rampp M."/>
            <person name="Rodriguez-Valera F."/>
            <person name="Pfeiffer F."/>
            <person name="Oesterhelt D."/>
        </authorList>
    </citation>
    <scope>NUCLEOTIDE SEQUENCE [LARGE SCALE GENOMIC DNA]</scope>
    <source>
        <strain>DSM 16790 / HBSQ001</strain>
    </source>
</reference>
<organism>
    <name type="scientific">Haloquadratum walsbyi (strain DSM 16790 / HBSQ001)</name>
    <dbReference type="NCBI Taxonomy" id="362976"/>
    <lineage>
        <taxon>Archaea</taxon>
        <taxon>Methanobacteriati</taxon>
        <taxon>Methanobacteriota</taxon>
        <taxon>Stenosarchaea group</taxon>
        <taxon>Halobacteria</taxon>
        <taxon>Halobacteriales</taxon>
        <taxon>Haloferacaceae</taxon>
        <taxon>Haloquadratum</taxon>
    </lineage>
</organism>
<gene>
    <name evidence="1" type="primary">mutS</name>
    <name type="ordered locus">HQ_3158A</name>
</gene>
<accession>Q18FJ9</accession>
<protein>
    <recommendedName>
        <fullName evidence="1">DNA mismatch repair protein MutS</fullName>
    </recommendedName>
</protein>
<comment type="function">
    <text evidence="1">This protein is involved in the repair of mismatches in DNA. It is possible that it carries out the mismatch recognition step. This protein has a weak ATPase activity.</text>
</comment>
<comment type="similarity">
    <text evidence="1">Belongs to the DNA mismatch repair MutS family.</text>
</comment>
<name>MUTS_HALWD</name>
<dbReference type="EMBL" id="AM180088">
    <property type="protein sequence ID" value="CAJ53258.1"/>
    <property type="molecule type" value="Genomic_DNA"/>
</dbReference>
<dbReference type="RefSeq" id="WP_011572364.1">
    <property type="nucleotide sequence ID" value="NC_008212.1"/>
</dbReference>
<dbReference type="SMR" id="Q18FJ9"/>
<dbReference type="STRING" id="362976.HQ_3158A"/>
<dbReference type="GeneID" id="4194318"/>
<dbReference type="KEGG" id="hwa:HQ_3158A"/>
<dbReference type="eggNOG" id="arCOG02897">
    <property type="taxonomic scope" value="Archaea"/>
</dbReference>
<dbReference type="HOGENOM" id="CLU_002472_3_2_2"/>
<dbReference type="Proteomes" id="UP000001975">
    <property type="component" value="Chromosome"/>
</dbReference>
<dbReference type="GO" id="GO:0005524">
    <property type="term" value="F:ATP binding"/>
    <property type="evidence" value="ECO:0007669"/>
    <property type="project" value="UniProtKB-UniRule"/>
</dbReference>
<dbReference type="GO" id="GO:0140664">
    <property type="term" value="F:ATP-dependent DNA damage sensor activity"/>
    <property type="evidence" value="ECO:0007669"/>
    <property type="project" value="InterPro"/>
</dbReference>
<dbReference type="GO" id="GO:0003684">
    <property type="term" value="F:damaged DNA binding"/>
    <property type="evidence" value="ECO:0007669"/>
    <property type="project" value="UniProtKB-UniRule"/>
</dbReference>
<dbReference type="GO" id="GO:0030983">
    <property type="term" value="F:mismatched DNA binding"/>
    <property type="evidence" value="ECO:0007669"/>
    <property type="project" value="InterPro"/>
</dbReference>
<dbReference type="GO" id="GO:0006298">
    <property type="term" value="P:mismatch repair"/>
    <property type="evidence" value="ECO:0007669"/>
    <property type="project" value="UniProtKB-UniRule"/>
</dbReference>
<dbReference type="FunFam" id="3.40.50.300:FF:000870">
    <property type="entry name" value="MutS protein homolog 4"/>
    <property type="match status" value="1"/>
</dbReference>
<dbReference type="Gene3D" id="1.10.1420.10">
    <property type="match status" value="2"/>
</dbReference>
<dbReference type="Gene3D" id="3.40.1170.10">
    <property type="entry name" value="DNA repair protein MutS, domain I"/>
    <property type="match status" value="1"/>
</dbReference>
<dbReference type="Gene3D" id="3.30.420.110">
    <property type="entry name" value="MutS, connector domain"/>
    <property type="match status" value="1"/>
</dbReference>
<dbReference type="Gene3D" id="3.40.50.300">
    <property type="entry name" value="P-loop containing nucleotide triphosphate hydrolases"/>
    <property type="match status" value="1"/>
</dbReference>
<dbReference type="HAMAP" id="MF_00096">
    <property type="entry name" value="MutS"/>
    <property type="match status" value="1"/>
</dbReference>
<dbReference type="InterPro" id="IPR005748">
    <property type="entry name" value="DNA_mismatch_repair_MutS"/>
</dbReference>
<dbReference type="InterPro" id="IPR007695">
    <property type="entry name" value="DNA_mismatch_repair_MutS-lik_N"/>
</dbReference>
<dbReference type="InterPro" id="IPR017261">
    <property type="entry name" value="DNA_mismatch_repair_MutS/MSH"/>
</dbReference>
<dbReference type="InterPro" id="IPR000432">
    <property type="entry name" value="DNA_mismatch_repair_MutS_C"/>
</dbReference>
<dbReference type="InterPro" id="IPR007861">
    <property type="entry name" value="DNA_mismatch_repair_MutS_clamp"/>
</dbReference>
<dbReference type="InterPro" id="IPR007696">
    <property type="entry name" value="DNA_mismatch_repair_MutS_core"/>
</dbReference>
<dbReference type="InterPro" id="IPR016151">
    <property type="entry name" value="DNA_mismatch_repair_MutS_N"/>
</dbReference>
<dbReference type="InterPro" id="IPR036187">
    <property type="entry name" value="DNA_mismatch_repair_MutS_sf"/>
</dbReference>
<dbReference type="InterPro" id="IPR007860">
    <property type="entry name" value="DNA_mmatch_repair_MutS_con_dom"/>
</dbReference>
<dbReference type="InterPro" id="IPR045076">
    <property type="entry name" value="MutS"/>
</dbReference>
<dbReference type="InterPro" id="IPR036678">
    <property type="entry name" value="MutS_con_dom_sf"/>
</dbReference>
<dbReference type="InterPro" id="IPR027417">
    <property type="entry name" value="P-loop_NTPase"/>
</dbReference>
<dbReference type="NCBIfam" id="TIGR01070">
    <property type="entry name" value="mutS1"/>
    <property type="match status" value="1"/>
</dbReference>
<dbReference type="NCBIfam" id="NF003810">
    <property type="entry name" value="PRK05399.1"/>
    <property type="match status" value="1"/>
</dbReference>
<dbReference type="PANTHER" id="PTHR11361:SF34">
    <property type="entry name" value="DNA MISMATCH REPAIR PROTEIN MSH1, MITOCHONDRIAL"/>
    <property type="match status" value="1"/>
</dbReference>
<dbReference type="PANTHER" id="PTHR11361">
    <property type="entry name" value="DNA MISMATCH REPAIR PROTEIN MUTS FAMILY MEMBER"/>
    <property type="match status" value="1"/>
</dbReference>
<dbReference type="Pfam" id="PF01624">
    <property type="entry name" value="MutS_I"/>
    <property type="match status" value="1"/>
</dbReference>
<dbReference type="Pfam" id="PF05188">
    <property type="entry name" value="MutS_II"/>
    <property type="match status" value="1"/>
</dbReference>
<dbReference type="Pfam" id="PF05192">
    <property type="entry name" value="MutS_III"/>
    <property type="match status" value="1"/>
</dbReference>
<dbReference type="Pfam" id="PF05190">
    <property type="entry name" value="MutS_IV"/>
    <property type="match status" value="1"/>
</dbReference>
<dbReference type="Pfam" id="PF00488">
    <property type="entry name" value="MutS_V"/>
    <property type="match status" value="1"/>
</dbReference>
<dbReference type="PIRSF" id="PIRSF037677">
    <property type="entry name" value="DNA_mis_repair_Msh6"/>
    <property type="match status" value="1"/>
</dbReference>
<dbReference type="SMART" id="SM00534">
    <property type="entry name" value="MUTSac"/>
    <property type="match status" value="1"/>
</dbReference>
<dbReference type="SMART" id="SM00533">
    <property type="entry name" value="MUTSd"/>
    <property type="match status" value="1"/>
</dbReference>
<dbReference type="SUPFAM" id="SSF55271">
    <property type="entry name" value="DNA repair protein MutS, domain I"/>
    <property type="match status" value="1"/>
</dbReference>
<dbReference type="SUPFAM" id="SSF53150">
    <property type="entry name" value="DNA repair protein MutS, domain II"/>
    <property type="match status" value="1"/>
</dbReference>
<dbReference type="SUPFAM" id="SSF48334">
    <property type="entry name" value="DNA repair protein MutS, domain III"/>
    <property type="match status" value="1"/>
</dbReference>
<dbReference type="SUPFAM" id="SSF52540">
    <property type="entry name" value="P-loop containing nucleoside triphosphate hydrolases"/>
    <property type="match status" value="1"/>
</dbReference>
<dbReference type="PROSITE" id="PS00486">
    <property type="entry name" value="DNA_MISMATCH_REPAIR_2"/>
    <property type="match status" value="1"/>
</dbReference>
<proteinExistence type="inferred from homology"/>
<sequence>MTTDTDTDVDAGTDLEPQPEGPPEKMLTRRTELTPMLSQYLDCCEAHPDALVLFQVGDFYEAFCEAATTVAQVCEVTLTQREDSTGTYRMAGVPIDNATSYIEALLSADFRVAIAEQVEEAEATSGLVDRAVTNIITPGTVTNGDLLTDAAATYLGAVSITDSDGDASEMTGAIATVDVSTGACRVTSVEHDQIYEELSRLRPAELLIGPEVDTKTIESSSLPFETMQTTHNSGAFELATATQTLEAYVDEPTAFLSSAERRAVGAVLDYAEYTQGDCGPLEYVSRIRRYKTDTALRVDATAIQSLELFDSRQPYGETLIETIDETSSALGRRTLESWLRRPLADHEAIKTRYDAVAALAENPLVVETLTEKLSHIYDLERLTARTAREQADARDMRSLLQSLDSIPEIKSALIEVLTETELPAETLEQLQAELDSLDDIRTLIDTAVCSDPPQTVTDGDVIAKGFNDDLDDIREREEAGREWVSELETRERERTGIDSLEVGYTEVHGYYIEVTNPNLDHVPDEYTRRQTLKNAERFYTPALKRREDEIIAASNRADKLEYELFCDIRAEVAAETSRLQAVADAIGRLDALVSFATIAISHAYVRPEITADTLAIEAGRHPVVEQTQAEFVPNGITFEKGHIAMITGPNMSGKSTYMRQIAHICILAQAGSFVPADAAQIPVLDRIFTRIGASDDISGGESTFMREMSEMTDILHNATESSLILLDEVGRGTSTTDGRAIARATVEFIHNEIGARTLFTTHYHDLTTVTGSLPSAFNLHFKVHRKTHPDNDASVTFLHRVTSGAADSSYGVEVAKLAGVPTPVVEQAQRYIHTEGEDYTEISEQGTHHHDELTHAEMVSVDHDNQQNQASDDDEIARSPRGADTNTDAGINQSDVSANIDVLKSLRDIDIARMTPLEALNMLENLQRRLDE</sequence>
<feature type="chain" id="PRO_0000335244" description="DNA mismatch repair protein MutS">
    <location>
        <begin position="1"/>
        <end position="932"/>
    </location>
</feature>
<feature type="region of interest" description="Disordered" evidence="2">
    <location>
        <begin position="1"/>
        <end position="26"/>
    </location>
</feature>
<feature type="region of interest" description="Disordered" evidence="2">
    <location>
        <begin position="865"/>
        <end position="892"/>
    </location>
</feature>
<feature type="compositionally biased region" description="Acidic residues" evidence="2">
    <location>
        <begin position="1"/>
        <end position="13"/>
    </location>
</feature>
<feature type="binding site" evidence="1">
    <location>
        <begin position="648"/>
        <end position="655"/>
    </location>
    <ligand>
        <name>ATP</name>
        <dbReference type="ChEBI" id="CHEBI:30616"/>
    </ligand>
</feature>
<keyword id="KW-0067">ATP-binding</keyword>
<keyword id="KW-0227">DNA damage</keyword>
<keyword id="KW-0234">DNA repair</keyword>
<keyword id="KW-0238">DNA-binding</keyword>
<keyword id="KW-0547">Nucleotide-binding</keyword>
<keyword id="KW-1185">Reference proteome</keyword>
<evidence type="ECO:0000255" key="1">
    <source>
        <dbReference type="HAMAP-Rule" id="MF_00096"/>
    </source>
</evidence>
<evidence type="ECO:0000256" key="2">
    <source>
        <dbReference type="SAM" id="MobiDB-lite"/>
    </source>
</evidence>